<gene>
    <name type="primary">mrps-31</name>
    <name type="ORF">C32A3.2</name>
</gene>
<feature type="transit peptide" description="Mitochondrion" evidence="2">
    <location>
        <begin position="1"/>
        <end position="21"/>
    </location>
</feature>
<feature type="chain" id="PRO_0000065213" description="Small ribosomal subunit protein mS31">
    <location>
        <begin position="22"/>
        <end position="383"/>
    </location>
</feature>
<feature type="coiled-coil region" evidence="2">
    <location>
        <begin position="158"/>
        <end position="187"/>
    </location>
</feature>
<comment type="subunit">
    <text evidence="1">Component of the mitochondrial ribosome small subunit (28S) which comprises a 12S rRNA and about 30 distinct proteins.</text>
</comment>
<comment type="subcellular location">
    <subcellularLocation>
        <location evidence="1">Mitochondrion</location>
    </subcellularLocation>
</comment>
<comment type="similarity">
    <text evidence="3">Belongs to the mitochondrion-specific ribosomal protein mS31 family.</text>
</comment>
<name>RT31_CAEEL</name>
<keyword id="KW-0175">Coiled coil</keyword>
<keyword id="KW-0496">Mitochondrion</keyword>
<keyword id="KW-1185">Reference proteome</keyword>
<keyword id="KW-0687">Ribonucleoprotein</keyword>
<keyword id="KW-0689">Ribosomal protein</keyword>
<keyword id="KW-0809">Transit peptide</keyword>
<evidence type="ECO:0000250" key="1">
    <source>
        <dbReference type="UniProtKB" id="P82925"/>
    </source>
</evidence>
<evidence type="ECO:0000255" key="2"/>
<evidence type="ECO:0000305" key="3"/>
<organism>
    <name type="scientific">Caenorhabditis elegans</name>
    <dbReference type="NCBI Taxonomy" id="6239"/>
    <lineage>
        <taxon>Eukaryota</taxon>
        <taxon>Metazoa</taxon>
        <taxon>Ecdysozoa</taxon>
        <taxon>Nematoda</taxon>
        <taxon>Chromadorea</taxon>
        <taxon>Rhabditida</taxon>
        <taxon>Rhabditina</taxon>
        <taxon>Rhabditomorpha</taxon>
        <taxon>Rhabditoidea</taxon>
        <taxon>Rhabditidae</taxon>
        <taxon>Peloderinae</taxon>
        <taxon>Caenorhabditis</taxon>
    </lineage>
</organism>
<accession>Q09261</accession>
<sequence>MLRSLCSIAVRLGGARQPRLLSSAASGDGNDGKGAKDAIDEDLLNAIEGVANNIHPQNGSEKKSLKNTLINRLVANEKASFDAAAASASSEMLDDQALIGLLADVAGDAKVEKKLPPKSAQLRQEKRGLVLLRKEIFYQAVQSGFTTEEARVKSETIVNEAQIKLQEQRKALLNDVREKVEQEEVEETERSEKDQKLFTMALEFMEKIYKDDLISSAVRKPVKVDNDAIKLFNQKPLGIWKKGEKYEDFSLGFWKQWDERAARISNGSFGPTNSFEEQIEWTTKGKQWEYPIDNEFKMGDESNVSFIDHVFLERHLPSLGIPKSGPIAHFMHLVCVGLSKNPYMTAAKKREHLKWFADYFNTEKQKLVHKLHEQEQIAAQNAL</sequence>
<proteinExistence type="inferred from homology"/>
<protein>
    <recommendedName>
        <fullName evidence="3">Small ribosomal subunit protein mS31</fullName>
    </recommendedName>
    <alternativeName>
        <fullName>28S ribosomal protein S31, mitochondrial</fullName>
        <shortName>MRP-S31</shortName>
        <shortName>S31mt</shortName>
    </alternativeName>
</protein>
<dbReference type="EMBL" id="Z48241">
    <property type="protein sequence ID" value="CAA88285.2"/>
    <property type="molecule type" value="Genomic_DNA"/>
</dbReference>
<dbReference type="PIR" id="T19629">
    <property type="entry name" value="T19629"/>
</dbReference>
<dbReference type="RefSeq" id="NP_497736.2">
    <property type="nucleotide sequence ID" value="NM_065335.5"/>
</dbReference>
<dbReference type="SMR" id="Q09261"/>
<dbReference type="BioGRID" id="47937">
    <property type="interactions" value="5"/>
</dbReference>
<dbReference type="FunCoup" id="Q09261">
    <property type="interactions" value="737"/>
</dbReference>
<dbReference type="IntAct" id="Q09261">
    <property type="interactions" value="1"/>
</dbReference>
<dbReference type="STRING" id="6239.C32A3.2.1"/>
<dbReference type="PaxDb" id="6239-C32A3.2"/>
<dbReference type="PeptideAtlas" id="Q09261"/>
<dbReference type="EnsemblMetazoa" id="C32A3.2.1">
    <property type="protein sequence ID" value="C32A3.2.1"/>
    <property type="gene ID" value="WBGene00007859"/>
</dbReference>
<dbReference type="GeneID" id="183104"/>
<dbReference type="KEGG" id="cel:CELE_C32A3.2"/>
<dbReference type="UCSC" id="C32A3.2">
    <property type="organism name" value="c. elegans"/>
</dbReference>
<dbReference type="AGR" id="WB:WBGene00007859"/>
<dbReference type="CTD" id="183104"/>
<dbReference type="WormBase" id="C32A3.2">
    <property type="protein sequence ID" value="CE44083"/>
    <property type="gene ID" value="WBGene00007859"/>
    <property type="gene designation" value="mrps-31"/>
</dbReference>
<dbReference type="eggNOG" id="ENOG502QSX9">
    <property type="taxonomic scope" value="Eukaryota"/>
</dbReference>
<dbReference type="GeneTree" id="ENSGT00390000010017"/>
<dbReference type="HOGENOM" id="CLU_060613_0_0_1"/>
<dbReference type="InParanoid" id="Q09261"/>
<dbReference type="OMA" id="LKREIFY"/>
<dbReference type="OrthoDB" id="5989925at2759"/>
<dbReference type="Reactome" id="R-CEL-5389840">
    <property type="pathway name" value="Mitochondrial translation elongation"/>
</dbReference>
<dbReference type="Reactome" id="R-CEL-5419276">
    <property type="pathway name" value="Mitochondrial translation termination"/>
</dbReference>
<dbReference type="PRO" id="PR:Q09261"/>
<dbReference type="Proteomes" id="UP000001940">
    <property type="component" value="Chromosome III"/>
</dbReference>
<dbReference type="Bgee" id="WBGene00007859">
    <property type="expression patterns" value="Expressed in pharyngeal muscle cell (C elegans) and 3 other cell types or tissues"/>
</dbReference>
<dbReference type="GO" id="GO:0005763">
    <property type="term" value="C:mitochondrial small ribosomal subunit"/>
    <property type="evidence" value="ECO:0007669"/>
    <property type="project" value="InterPro"/>
</dbReference>
<dbReference type="GO" id="GO:0003735">
    <property type="term" value="F:structural constituent of ribosome"/>
    <property type="evidence" value="ECO:0007669"/>
    <property type="project" value="InterPro"/>
</dbReference>
<dbReference type="InterPro" id="IPR026299">
    <property type="entry name" value="MRP-S31"/>
</dbReference>
<dbReference type="PANTHER" id="PTHR13231">
    <property type="entry name" value="MITOCHONDRIAL RIBOSOMAL PROTEIN S31"/>
    <property type="match status" value="1"/>
</dbReference>
<dbReference type="PANTHER" id="PTHR13231:SF3">
    <property type="entry name" value="SMALL RIBOSOMAL SUBUNIT PROTEIN MS31"/>
    <property type="match status" value="1"/>
</dbReference>
<dbReference type="Pfam" id="PF15433">
    <property type="entry name" value="MRP-S31"/>
    <property type="match status" value="1"/>
</dbReference>
<reference key="1">
    <citation type="journal article" date="1998" name="Science">
        <title>Genome sequence of the nematode C. elegans: a platform for investigating biology.</title>
        <authorList>
            <consortium name="The C. elegans sequencing consortium"/>
        </authorList>
    </citation>
    <scope>NUCLEOTIDE SEQUENCE [LARGE SCALE GENOMIC DNA]</scope>
    <source>
        <strain>Bristol N2</strain>
    </source>
</reference>